<reference key="1">
    <citation type="journal article" date="2003" name="J. Biol. Chem.">
        <title>A role for Saccharomyces cerevisiae Cul8 ubiquitin ligase in proper anaphase progression.</title>
        <authorList>
            <person name="Michel J.J."/>
            <person name="McCarville J.F."/>
            <person name="Xiong Y."/>
        </authorList>
    </citation>
    <scope>NUCLEOTIDE SEQUENCE [GENOMIC DNA]</scope>
    <scope>FUNCTION</scope>
</reference>
<reference key="2">
    <citation type="journal article" date="1997" name="Nature">
        <title>The nucleotide sequence of Saccharomyces cerevisiae chromosome VII.</title>
        <authorList>
            <person name="Tettelin H."/>
            <person name="Agostoni-Carbone M.L."/>
            <person name="Albermann K."/>
            <person name="Albers M."/>
            <person name="Arroyo J."/>
            <person name="Backes U."/>
            <person name="Barreiros T."/>
            <person name="Bertani I."/>
            <person name="Bjourson A.J."/>
            <person name="Brueckner M."/>
            <person name="Bruschi C.V."/>
            <person name="Carignani G."/>
            <person name="Castagnoli L."/>
            <person name="Cerdan E."/>
            <person name="Clemente M.L."/>
            <person name="Coblenz A."/>
            <person name="Coglievina M."/>
            <person name="Coissac E."/>
            <person name="Defoor E."/>
            <person name="Del Bino S."/>
            <person name="Delius H."/>
            <person name="Delneri D."/>
            <person name="de Wergifosse P."/>
            <person name="Dujon B."/>
            <person name="Durand P."/>
            <person name="Entian K.-D."/>
            <person name="Eraso P."/>
            <person name="Escribano V."/>
            <person name="Fabiani L."/>
            <person name="Fartmann B."/>
            <person name="Feroli F."/>
            <person name="Feuermann M."/>
            <person name="Frontali L."/>
            <person name="Garcia-Gonzalez M."/>
            <person name="Garcia-Saez M.I."/>
            <person name="Goffeau A."/>
            <person name="Guerreiro P."/>
            <person name="Hani J."/>
            <person name="Hansen M."/>
            <person name="Hebling U."/>
            <person name="Hernandez K."/>
            <person name="Heumann K."/>
            <person name="Hilger F."/>
            <person name="Hofmann B."/>
            <person name="Indge K.J."/>
            <person name="James C.M."/>
            <person name="Klima R."/>
            <person name="Koetter P."/>
            <person name="Kramer B."/>
            <person name="Kramer W."/>
            <person name="Lauquin G."/>
            <person name="Leuther H."/>
            <person name="Louis E.J."/>
            <person name="Maillier E."/>
            <person name="Marconi A."/>
            <person name="Martegani E."/>
            <person name="Mazon M.J."/>
            <person name="Mazzoni C."/>
            <person name="McReynolds A.D.K."/>
            <person name="Melchioretto P."/>
            <person name="Mewes H.-W."/>
            <person name="Minenkova O."/>
            <person name="Mueller-Auer S."/>
            <person name="Nawrocki A."/>
            <person name="Netter P."/>
            <person name="Neu R."/>
            <person name="Nombela C."/>
            <person name="Oliver S.G."/>
            <person name="Panzeri L."/>
            <person name="Paoluzi S."/>
            <person name="Plevani P."/>
            <person name="Portetelle D."/>
            <person name="Portillo F."/>
            <person name="Potier S."/>
            <person name="Purnelle B."/>
            <person name="Rieger M."/>
            <person name="Riles L."/>
            <person name="Rinaldi T."/>
            <person name="Robben J."/>
            <person name="Rodrigues-Pousada C."/>
            <person name="Rodriguez-Belmonte E."/>
            <person name="Rodriguez-Torres A.M."/>
            <person name="Rose M."/>
            <person name="Ruzzi M."/>
            <person name="Saliola M."/>
            <person name="Sanchez-Perez M."/>
            <person name="Schaefer B."/>
            <person name="Schaefer M."/>
            <person name="Scharfe M."/>
            <person name="Schmidheini T."/>
            <person name="Schreer A."/>
            <person name="Skala J."/>
            <person name="Souciet J.-L."/>
            <person name="Steensma H.Y."/>
            <person name="Talla E."/>
            <person name="Thierry A."/>
            <person name="Vandenbol M."/>
            <person name="van der Aart Q.J.M."/>
            <person name="Van Dyck L."/>
            <person name="Vanoni M."/>
            <person name="Verhasselt P."/>
            <person name="Voet M."/>
            <person name="Volckaert G."/>
            <person name="Wambutt R."/>
            <person name="Watson M.D."/>
            <person name="Weber N."/>
            <person name="Wedler E."/>
            <person name="Wedler H."/>
            <person name="Wipfli P."/>
            <person name="Wolf K."/>
            <person name="Wright L.F."/>
            <person name="Zaccaria P."/>
            <person name="Zimmermann M."/>
            <person name="Zollner A."/>
            <person name="Kleine K."/>
        </authorList>
    </citation>
    <scope>NUCLEOTIDE SEQUENCE [LARGE SCALE GENOMIC DNA]</scope>
    <source>
        <strain>ATCC 204508 / S288c</strain>
    </source>
</reference>
<reference key="3">
    <citation type="journal article" date="2014" name="G3 (Bethesda)">
        <title>The reference genome sequence of Saccharomyces cerevisiae: Then and now.</title>
        <authorList>
            <person name="Engel S.R."/>
            <person name="Dietrich F.S."/>
            <person name="Fisk D.G."/>
            <person name="Binkley G."/>
            <person name="Balakrishnan R."/>
            <person name="Costanzo M.C."/>
            <person name="Dwight S.S."/>
            <person name="Hitz B.C."/>
            <person name="Karra K."/>
            <person name="Nash R.S."/>
            <person name="Weng S."/>
            <person name="Wong E.D."/>
            <person name="Lloyd P."/>
            <person name="Skrzypek M.S."/>
            <person name="Miyasato S.R."/>
            <person name="Simison M."/>
            <person name="Cherry J.M."/>
        </authorList>
    </citation>
    <scope>GENOME REANNOTATION</scope>
    <source>
        <strain>ATCC 204508 / S288c</strain>
    </source>
</reference>
<reference key="4">
    <citation type="journal article" date="2003" name="Nature">
        <title>Global analysis of protein expression in yeast.</title>
        <authorList>
            <person name="Ghaemmaghami S."/>
            <person name="Huh W.-K."/>
            <person name="Bower K."/>
            <person name="Howson R.W."/>
            <person name="Belle A."/>
            <person name="Dephoure N."/>
            <person name="O'Shea E.K."/>
            <person name="Weissman J.S."/>
        </authorList>
    </citation>
    <scope>LEVEL OF PROTEIN EXPRESSION [LARGE SCALE ANALYSIS]</scope>
</reference>
<reference key="5">
    <citation type="journal article" date="2007" name="Mol. Cell. Biol.">
        <title>ELA1 and CUL3 are required along with ELC1 for RNA polymerase II polyubiquitylation and degradation in DNA-damaged yeast cells.</title>
        <authorList>
            <person name="Ribar B."/>
            <person name="Prakash L."/>
            <person name="Prakash S."/>
        </authorList>
    </citation>
    <scope>FUNCTION</scope>
    <scope>IDENTIFICATION IN A CRL3 E3 UBIQUITIN LIGASE COMPLEX</scope>
</reference>
<reference key="6">
    <citation type="journal article" date="2009" name="Proc. Natl. Acad. Sci. U.S.A.">
        <title>Distinct ubiquitin ligases act sequentially for RNA polymerase II polyubiquitylation.</title>
        <authorList>
            <person name="Harreman M."/>
            <person name="Taschner M."/>
            <person name="Sigurdsson S."/>
            <person name="Anindya R."/>
            <person name="Reid J."/>
            <person name="Somesh B."/>
            <person name="Kong S.E."/>
            <person name="Banks C.A."/>
            <person name="Conaway R.C."/>
            <person name="Conaway J.W."/>
            <person name="Svejstrup J.Q."/>
        </authorList>
    </citation>
    <scope>FUNCTION</scope>
    <scope>IDENTIFICATION IN A CRL3 E3 UBIQUITIN LIGASE COMPLEX</scope>
    <scope>IDENTIFICATION BY MASS SPECTROMETRY</scope>
</reference>
<dbReference type="EMBL" id="AY387706">
    <property type="protein sequence ID" value="AAQ91375.1"/>
    <property type="molecule type" value="Genomic_DNA"/>
</dbReference>
<dbReference type="EMBL" id="Z72788">
    <property type="protein sequence ID" value="CAA96986.1"/>
    <property type="molecule type" value="Genomic_DNA"/>
</dbReference>
<dbReference type="EMBL" id="BK006941">
    <property type="protein sequence ID" value="DAA08101.1"/>
    <property type="molecule type" value="Genomic_DNA"/>
</dbReference>
<dbReference type="PIR" id="S64292">
    <property type="entry name" value="S64292"/>
</dbReference>
<dbReference type="RefSeq" id="NP_011517.1">
    <property type="nucleotide sequence ID" value="NM_001181132.1"/>
</dbReference>
<dbReference type="SMR" id="P53202"/>
<dbReference type="BioGRID" id="33247">
    <property type="interactions" value="137"/>
</dbReference>
<dbReference type="ComplexPortal" id="CPX-1191">
    <property type="entry name" value="Global genome repair CUL3-RAD7-RAD16-ELC1 ubiquitin ligase complex"/>
</dbReference>
<dbReference type="ComplexPortal" id="CPX-1837">
    <property type="entry name" value="CUL3-HRT1-ELC1-ELA1 ubiquitin ligase complex"/>
</dbReference>
<dbReference type="DIP" id="DIP-5506N"/>
<dbReference type="FunCoup" id="P53202">
    <property type="interactions" value="933"/>
</dbReference>
<dbReference type="IntAct" id="P53202">
    <property type="interactions" value="6"/>
</dbReference>
<dbReference type="MINT" id="P53202"/>
<dbReference type="STRING" id="4932.YGR003W"/>
<dbReference type="iPTMnet" id="P53202"/>
<dbReference type="PaxDb" id="4932-YGR003W"/>
<dbReference type="PeptideAtlas" id="P53202"/>
<dbReference type="EnsemblFungi" id="YGR003W_mRNA">
    <property type="protein sequence ID" value="YGR003W"/>
    <property type="gene ID" value="YGR003W"/>
</dbReference>
<dbReference type="GeneID" id="852886"/>
<dbReference type="KEGG" id="sce:YGR003W"/>
<dbReference type="AGR" id="SGD:S000003235"/>
<dbReference type="SGD" id="S000003235">
    <property type="gene designation" value="CUL3"/>
</dbReference>
<dbReference type="VEuPathDB" id="FungiDB:YGR003W"/>
<dbReference type="eggNOG" id="KOG2166">
    <property type="taxonomic scope" value="Eukaryota"/>
</dbReference>
<dbReference type="HOGENOM" id="CLU_004747_7_1_1"/>
<dbReference type="InParanoid" id="P53202"/>
<dbReference type="OMA" id="MFKDMTI"/>
<dbReference type="OrthoDB" id="27073at2759"/>
<dbReference type="BioCyc" id="YEAST:G3O-30734-MONOMER"/>
<dbReference type="UniPathway" id="UPA00143"/>
<dbReference type="BioGRID-ORCS" id="852886">
    <property type="hits" value="1 hit in 10 CRISPR screens"/>
</dbReference>
<dbReference type="PRO" id="PR:P53202"/>
<dbReference type="Proteomes" id="UP000002311">
    <property type="component" value="Chromosome VII"/>
</dbReference>
<dbReference type="RNAct" id="P53202">
    <property type="molecule type" value="protein"/>
</dbReference>
<dbReference type="GO" id="GO:0031463">
    <property type="term" value="C:Cul3-RING ubiquitin ligase complex"/>
    <property type="evidence" value="ECO:0000314"/>
    <property type="project" value="SGD"/>
</dbReference>
<dbReference type="GO" id="GO:0005737">
    <property type="term" value="C:cytoplasm"/>
    <property type="evidence" value="ECO:0007005"/>
    <property type="project" value="SGD"/>
</dbReference>
<dbReference type="GO" id="GO:0005634">
    <property type="term" value="C:nucleus"/>
    <property type="evidence" value="ECO:0007005"/>
    <property type="project" value="SGD"/>
</dbReference>
<dbReference type="GO" id="GO:0031625">
    <property type="term" value="F:ubiquitin protein ligase binding"/>
    <property type="evidence" value="ECO:0000318"/>
    <property type="project" value="GO_Central"/>
</dbReference>
<dbReference type="GO" id="GO:0004842">
    <property type="term" value="F:ubiquitin-protein transferase activity"/>
    <property type="evidence" value="ECO:0000314"/>
    <property type="project" value="SGD"/>
</dbReference>
<dbReference type="GO" id="GO:0070911">
    <property type="term" value="P:global genome nucleotide-excision repair"/>
    <property type="evidence" value="ECO:0000303"/>
    <property type="project" value="ComplexPortal"/>
</dbReference>
<dbReference type="GO" id="GO:0006289">
    <property type="term" value="P:nucleotide-excision repair"/>
    <property type="evidence" value="ECO:0000303"/>
    <property type="project" value="ComplexPortal"/>
</dbReference>
<dbReference type="GO" id="GO:0016567">
    <property type="term" value="P:protein ubiquitination"/>
    <property type="evidence" value="ECO:0000318"/>
    <property type="project" value="GO_Central"/>
</dbReference>
<dbReference type="GO" id="GO:0009411">
    <property type="term" value="P:response to UV"/>
    <property type="evidence" value="ECO:0000314"/>
    <property type="project" value="ComplexPortal"/>
</dbReference>
<dbReference type="GO" id="GO:0006511">
    <property type="term" value="P:ubiquitin-dependent protein catabolic process"/>
    <property type="evidence" value="ECO:0000314"/>
    <property type="project" value="ComplexPortal"/>
</dbReference>
<dbReference type="FunFam" id="1.10.10.10:FF:000840">
    <property type="entry name" value="Cul3p"/>
    <property type="match status" value="1"/>
</dbReference>
<dbReference type="Gene3D" id="1.20.1310.10">
    <property type="entry name" value="Cullin Repeats"/>
    <property type="match status" value="3"/>
</dbReference>
<dbReference type="Gene3D" id="3.30.230.130">
    <property type="entry name" value="Cullin, Chain C, Domain 2"/>
    <property type="match status" value="1"/>
</dbReference>
<dbReference type="Gene3D" id="1.10.10.10">
    <property type="entry name" value="Winged helix-like DNA-binding domain superfamily/Winged helix DNA-binding domain"/>
    <property type="match status" value="1"/>
</dbReference>
<dbReference type="InterPro" id="IPR045093">
    <property type="entry name" value="Cullin"/>
</dbReference>
<dbReference type="InterPro" id="IPR016157">
    <property type="entry name" value="Cullin_CS"/>
</dbReference>
<dbReference type="InterPro" id="IPR016158">
    <property type="entry name" value="Cullin_homology"/>
</dbReference>
<dbReference type="InterPro" id="IPR036317">
    <property type="entry name" value="Cullin_homology_sf"/>
</dbReference>
<dbReference type="InterPro" id="IPR001373">
    <property type="entry name" value="Cullin_N"/>
</dbReference>
<dbReference type="InterPro" id="IPR019559">
    <property type="entry name" value="Cullin_neddylation_domain"/>
</dbReference>
<dbReference type="InterPro" id="IPR016159">
    <property type="entry name" value="Cullin_repeat-like_dom_sf"/>
</dbReference>
<dbReference type="InterPro" id="IPR036388">
    <property type="entry name" value="WH-like_DNA-bd_sf"/>
</dbReference>
<dbReference type="InterPro" id="IPR036390">
    <property type="entry name" value="WH_DNA-bd_sf"/>
</dbReference>
<dbReference type="PANTHER" id="PTHR11932">
    <property type="entry name" value="CULLIN"/>
    <property type="match status" value="1"/>
</dbReference>
<dbReference type="Pfam" id="PF00888">
    <property type="entry name" value="Cullin"/>
    <property type="match status" value="1"/>
</dbReference>
<dbReference type="Pfam" id="PF10557">
    <property type="entry name" value="Cullin_Nedd8"/>
    <property type="match status" value="1"/>
</dbReference>
<dbReference type="SMART" id="SM00182">
    <property type="entry name" value="CULLIN"/>
    <property type="match status" value="1"/>
</dbReference>
<dbReference type="SMART" id="SM00884">
    <property type="entry name" value="Cullin_Nedd8"/>
    <property type="match status" value="1"/>
</dbReference>
<dbReference type="SUPFAM" id="SSF75632">
    <property type="entry name" value="Cullin homology domain"/>
    <property type="match status" value="1"/>
</dbReference>
<dbReference type="SUPFAM" id="SSF74788">
    <property type="entry name" value="Cullin repeat-like"/>
    <property type="match status" value="1"/>
</dbReference>
<dbReference type="SUPFAM" id="SSF46785">
    <property type="entry name" value="Winged helix' DNA-binding domain"/>
    <property type="match status" value="1"/>
</dbReference>
<dbReference type="PROSITE" id="PS01256">
    <property type="entry name" value="CULLIN_1"/>
    <property type="match status" value="1"/>
</dbReference>
<dbReference type="PROSITE" id="PS50069">
    <property type="entry name" value="CULLIN_2"/>
    <property type="match status" value="1"/>
</dbReference>
<protein>
    <recommendedName>
        <fullName>Cullin-3</fullName>
    </recommendedName>
    <alternativeName>
        <fullName>Cullin-B</fullName>
    </alternativeName>
</protein>
<accession>P53202</accession>
<accession>D6VUE0</accession>
<keyword id="KW-1017">Isopeptide bond</keyword>
<keyword id="KW-1185">Reference proteome</keyword>
<keyword id="KW-0832">Ubl conjugation</keyword>
<keyword id="KW-0833">Ubl conjugation pathway</keyword>
<comment type="function">
    <text evidence="5 7 8">As part of the CRL3 E3 ubiquitin ligase complex; polyubiquitylates monoubiquitylated RNA polymerase II subunit RPO21 to trigger its proteolysis; plays a role in global genomic repair.</text>
</comment>
<comment type="pathway">
    <text>Protein modification; protein ubiquitination.</text>
</comment>
<comment type="subunit">
    <text evidence="7 8">Component of a ubiquitin-protein ligase complex consisting of the cullin CUL3, the linker protein ELC1, the substrate receptor ELA1, and the RING protein HRT1.</text>
</comment>
<comment type="interaction">
    <interactant intactId="EBI-23065">
        <id>P53202</id>
    </interactant>
    <interactant intactId="EBI-31686">
        <id>Q08273</id>
        <label>HRT1</label>
    </interactant>
    <organismsDiffer>false</organismsDiffer>
    <experiments>3</experiments>
</comment>
<comment type="interaction">
    <interactant intactId="EBI-23065">
        <id>P53202</id>
    </interactant>
    <interactant intactId="EBI-24911">
        <id>P40560</id>
        <label>YIL001W</label>
    </interactant>
    <organismsDiffer>false</organismsDiffer>
    <experiments>3</experiments>
</comment>
<comment type="PTM">
    <text evidence="1">Neddylated; enhancing the ubiquitin-ligase activity.</text>
</comment>
<comment type="miscellaneous">
    <text evidence="6">Present with 172 molecules/cell in log phase SD medium.</text>
</comment>
<comment type="similarity">
    <text evidence="4">Belongs to the cullin family.</text>
</comment>
<gene>
    <name type="primary">CUL3</name>
    <name type="ordered locus">YGR003W</name>
</gene>
<organism>
    <name type="scientific">Saccharomyces cerevisiae (strain ATCC 204508 / S288c)</name>
    <name type="common">Baker's yeast</name>
    <dbReference type="NCBI Taxonomy" id="559292"/>
    <lineage>
        <taxon>Eukaryota</taxon>
        <taxon>Fungi</taxon>
        <taxon>Dikarya</taxon>
        <taxon>Ascomycota</taxon>
        <taxon>Saccharomycotina</taxon>
        <taxon>Saccharomycetes</taxon>
        <taxon>Saccharomycetales</taxon>
        <taxon>Saccharomycetaceae</taxon>
        <taxon>Saccharomyces</taxon>
    </lineage>
</organism>
<sequence length="744" mass="86115">MITNKKIKISVPEKLGLSEESFEESWETVKYAIDHIYSDDMADLSFEQVYKTIYTIVLNKKGPILYNRLKDYLIQKLALLRETIVKDNTHDYEFLGTMARLWEVQCHCFKITGDLMMYMDKVYCKPNRCMEVYDMCLDLFRIEILQKCSSSLISALISDIERIRNLGSVDSEHTSLWKVLIGMMETLHDNRDSFFLTDFEPVLISATEEYYNKAIDIELLTPIESLEKIRKLRQFESMLDSSFLNVDSHNKLKTVLENVLIWGKLSDIIEDLTHEAMVISNGKLLQEIYDLSSEEKYRVTVIESIKSYINKNAINIPFNEGNRKKGQNAITWSSEIVELYRSQHSFLESIDFGSVRLNNLTGDVSNAILGDVFSMYFSKEGALPSEYLSTYVDHCMKRTKEKDAEIVKIKQDLLDSTKLIGLLTEKDIFEKIYKKQLSRRLLQQRSLVEIEKWMVQMIKKVLGTFFTSKLEIMLRDISLSSEMYQAFQHSTINSIEYLSFAPQVLTRTSWPFQSTNPIDEGISLPPRMSQILAGFEGYYSLKYKERVLKWAHHLSVIEIGCQFNSGYYEISFSVYAGVIFLLFEDYEELTLGEIYELTHIPIDDVKSLVMSMSTIPRCKILKKSSSSGNMKFSVNYFFSSPNRKVKVPVIACPLPSQKSDNLATASSVDTYDNEIVMELSAIIVRIMKTEGKLSHQQLLERTTKRTQSRLSLTPSILKRSIQLLIEKEYIQRNADDPSYYHYLS</sequence>
<evidence type="ECO:0000250" key="1">
    <source>
        <dbReference type="UniProtKB" id="P47050"/>
    </source>
</evidence>
<evidence type="ECO:0000250" key="2">
    <source>
        <dbReference type="UniProtKB" id="Q13616"/>
    </source>
</evidence>
<evidence type="ECO:0000255" key="3"/>
<evidence type="ECO:0000255" key="4">
    <source>
        <dbReference type="PROSITE-ProRule" id="PRU00330"/>
    </source>
</evidence>
<evidence type="ECO:0000269" key="5">
    <source>
    </source>
</evidence>
<evidence type="ECO:0000269" key="6">
    <source>
    </source>
</evidence>
<evidence type="ECO:0000269" key="7">
    <source>
    </source>
</evidence>
<evidence type="ECO:0000269" key="8">
    <source>
    </source>
</evidence>
<name>CUL3_YEAST</name>
<proteinExistence type="evidence at protein level"/>
<feature type="chain" id="PRO_0000119806" description="Cullin-3">
    <location>
        <begin position="1"/>
        <end position="744"/>
    </location>
</feature>
<feature type="domain" description="Cullin neddylation" evidence="3">
    <location>
        <begin position="677"/>
        <end position="736"/>
    </location>
</feature>
<feature type="cross-link" description="Glycyl lysine isopeptide (Lys-Gly) (interchain with G-Cter in NEDD8)" evidence="2">
    <location>
        <position position="688"/>
    </location>
</feature>